<gene>
    <name evidence="1" type="primary">cbbL</name>
    <name evidence="1" type="synonym">rbcL</name>
    <name type="ordered locus">Syncc9902_1614</name>
</gene>
<sequence>MSKKYDAGVKEYRDTYWTPDYVPLDTDLLACFKCTGQEGVPKEEVAAAVAAESSTGTWSTVWSELLTDLDFYKGRCYRIEDVPGDKEAFYAFIAYPLDLFEEGSITNVLTSLVGNVFGFKALRHLRLEDIRFPIAFIKCCAGPPNGIAVERDRMNKYGRPLLGCTIKPKLGLSGKNYGRVVYECLRGGLDFTKDDENINSQPFQRWQNRFEFVAEAIKLAEQETGERKGHYLNVTANTPEEMYERAEFAKELNQPIIMHDFITGGFTANTGLSKWCRANGMLLHIHRAMHAVIDRHPKHGIHFRVLAKCLRLSGGDQLHTGTVVGKLEGDRQTTLGYIDQLRESFVPEDRSRGNFFDQDWGSMPGVFAVASGGIHVWHMPALVAIFGDDSVLQFGGGTHGHPWGSAAGAAANRVALEACVKARNAGREIEKESRDILMEAGKHSPELAIALETWKEIKFEFDTVDKLDVQ</sequence>
<protein>
    <recommendedName>
        <fullName evidence="1">Ribulose bisphosphate carboxylase large chain</fullName>
        <shortName evidence="1">RuBisCO large subunit</shortName>
        <ecNumber evidence="1">4.1.1.39</ecNumber>
    </recommendedName>
</protein>
<dbReference type="EC" id="4.1.1.39" evidence="1"/>
<dbReference type="EMBL" id="CP000097">
    <property type="protein sequence ID" value="ABB26572.1"/>
    <property type="molecule type" value="Genomic_DNA"/>
</dbReference>
<dbReference type="RefSeq" id="WP_009789299.1">
    <property type="nucleotide sequence ID" value="NC_007513.1"/>
</dbReference>
<dbReference type="SMR" id="Q3AWU1"/>
<dbReference type="STRING" id="316279.Syncc9902_1614"/>
<dbReference type="KEGG" id="sye:Syncc9902_1614"/>
<dbReference type="eggNOG" id="COG1850">
    <property type="taxonomic scope" value="Bacteria"/>
</dbReference>
<dbReference type="HOGENOM" id="CLU_031450_2_0_3"/>
<dbReference type="OrthoDB" id="9770811at2"/>
<dbReference type="Proteomes" id="UP000002712">
    <property type="component" value="Chromosome"/>
</dbReference>
<dbReference type="GO" id="GO:0031470">
    <property type="term" value="C:carboxysome"/>
    <property type="evidence" value="ECO:0007669"/>
    <property type="project" value="UniProtKB-SubCell"/>
</dbReference>
<dbReference type="GO" id="GO:0000287">
    <property type="term" value="F:magnesium ion binding"/>
    <property type="evidence" value="ECO:0007669"/>
    <property type="project" value="UniProtKB-UniRule"/>
</dbReference>
<dbReference type="GO" id="GO:0004497">
    <property type="term" value="F:monooxygenase activity"/>
    <property type="evidence" value="ECO:0007669"/>
    <property type="project" value="UniProtKB-KW"/>
</dbReference>
<dbReference type="GO" id="GO:0016984">
    <property type="term" value="F:ribulose-bisphosphate carboxylase activity"/>
    <property type="evidence" value="ECO:0007669"/>
    <property type="project" value="UniProtKB-UniRule"/>
</dbReference>
<dbReference type="GO" id="GO:0009853">
    <property type="term" value="P:photorespiration"/>
    <property type="evidence" value="ECO:0007669"/>
    <property type="project" value="UniProtKB-KW"/>
</dbReference>
<dbReference type="GO" id="GO:0019253">
    <property type="term" value="P:reductive pentose-phosphate cycle"/>
    <property type="evidence" value="ECO:0007669"/>
    <property type="project" value="UniProtKB-UniRule"/>
</dbReference>
<dbReference type="Gene3D" id="3.20.20.110">
    <property type="entry name" value="Ribulose bisphosphate carboxylase, large subunit, C-terminal domain"/>
    <property type="match status" value="1"/>
</dbReference>
<dbReference type="Gene3D" id="3.30.70.150">
    <property type="entry name" value="RuBisCO large subunit, N-terminal domain"/>
    <property type="match status" value="1"/>
</dbReference>
<dbReference type="HAMAP" id="MF_01338">
    <property type="entry name" value="RuBisCO_L_type1"/>
    <property type="match status" value="1"/>
</dbReference>
<dbReference type="InterPro" id="IPR033966">
    <property type="entry name" value="RuBisCO"/>
</dbReference>
<dbReference type="InterPro" id="IPR020878">
    <property type="entry name" value="RuBisCo_large_chain_AS"/>
</dbReference>
<dbReference type="InterPro" id="IPR000685">
    <property type="entry name" value="RuBisCO_lsu_C"/>
</dbReference>
<dbReference type="InterPro" id="IPR036376">
    <property type="entry name" value="RuBisCO_lsu_C_sf"/>
</dbReference>
<dbReference type="InterPro" id="IPR017443">
    <property type="entry name" value="RuBisCO_lsu_fd_N"/>
</dbReference>
<dbReference type="InterPro" id="IPR036422">
    <property type="entry name" value="RuBisCO_lsu_N_sf"/>
</dbReference>
<dbReference type="InterPro" id="IPR020888">
    <property type="entry name" value="RuBisCO_lsuI"/>
</dbReference>
<dbReference type="NCBIfam" id="NF003252">
    <property type="entry name" value="PRK04208.1"/>
    <property type="match status" value="1"/>
</dbReference>
<dbReference type="PANTHER" id="PTHR42704">
    <property type="entry name" value="RIBULOSE BISPHOSPHATE CARBOXYLASE"/>
    <property type="match status" value="1"/>
</dbReference>
<dbReference type="PANTHER" id="PTHR42704:SF17">
    <property type="entry name" value="RIBULOSE BISPHOSPHATE CARBOXYLASE LARGE CHAIN"/>
    <property type="match status" value="1"/>
</dbReference>
<dbReference type="Pfam" id="PF00016">
    <property type="entry name" value="RuBisCO_large"/>
    <property type="match status" value="1"/>
</dbReference>
<dbReference type="Pfam" id="PF02788">
    <property type="entry name" value="RuBisCO_large_N"/>
    <property type="match status" value="1"/>
</dbReference>
<dbReference type="SFLD" id="SFLDG01052">
    <property type="entry name" value="RuBisCO"/>
    <property type="match status" value="1"/>
</dbReference>
<dbReference type="SFLD" id="SFLDS00014">
    <property type="entry name" value="RuBisCO"/>
    <property type="match status" value="1"/>
</dbReference>
<dbReference type="SFLD" id="SFLDG00301">
    <property type="entry name" value="RuBisCO-like_proteins"/>
    <property type="match status" value="1"/>
</dbReference>
<dbReference type="SUPFAM" id="SSF51649">
    <property type="entry name" value="RuBisCo, C-terminal domain"/>
    <property type="match status" value="1"/>
</dbReference>
<dbReference type="SUPFAM" id="SSF54966">
    <property type="entry name" value="RuBisCO, large subunit, small (N-terminal) domain"/>
    <property type="match status" value="1"/>
</dbReference>
<dbReference type="PROSITE" id="PS00157">
    <property type="entry name" value="RUBISCO_LARGE"/>
    <property type="match status" value="1"/>
</dbReference>
<name>RBL_SYNS9</name>
<reference key="1">
    <citation type="submission" date="2005-08" db="EMBL/GenBank/DDBJ databases">
        <title>Complete sequence of Synechococcus sp. CC9902.</title>
        <authorList>
            <person name="Copeland A."/>
            <person name="Lucas S."/>
            <person name="Lapidus A."/>
            <person name="Barry K."/>
            <person name="Detter J.C."/>
            <person name="Glavina T."/>
            <person name="Hammon N."/>
            <person name="Israni S."/>
            <person name="Pitluck S."/>
            <person name="Martinez M."/>
            <person name="Schmutz J."/>
            <person name="Larimer F."/>
            <person name="Land M."/>
            <person name="Kyrpides N."/>
            <person name="Ivanova N."/>
            <person name="Richardson P."/>
        </authorList>
    </citation>
    <scope>NUCLEOTIDE SEQUENCE [LARGE SCALE GENOMIC DNA]</scope>
    <source>
        <strain>CC9902</strain>
    </source>
</reference>
<evidence type="ECO:0000255" key="1">
    <source>
        <dbReference type="HAMAP-Rule" id="MF_01338"/>
    </source>
</evidence>
<accession>Q3AWU1</accession>
<comment type="function">
    <text evidence="1">RuBisCO catalyzes two reactions: the carboxylation of D-ribulose 1,5-bisphosphate, the primary event in carbon dioxide fixation, as well as the oxidative fragmentation of the pentose substrate in the photorespiration process. Both reactions occur simultaneously and in competition at the same active site.</text>
</comment>
<comment type="catalytic activity">
    <reaction evidence="1">
        <text>2 (2R)-3-phosphoglycerate + 2 H(+) = D-ribulose 1,5-bisphosphate + CO2 + H2O</text>
        <dbReference type="Rhea" id="RHEA:23124"/>
        <dbReference type="ChEBI" id="CHEBI:15377"/>
        <dbReference type="ChEBI" id="CHEBI:15378"/>
        <dbReference type="ChEBI" id="CHEBI:16526"/>
        <dbReference type="ChEBI" id="CHEBI:57870"/>
        <dbReference type="ChEBI" id="CHEBI:58272"/>
        <dbReference type="EC" id="4.1.1.39"/>
    </reaction>
</comment>
<comment type="catalytic activity">
    <reaction evidence="1">
        <text>D-ribulose 1,5-bisphosphate + O2 = 2-phosphoglycolate + (2R)-3-phosphoglycerate + 2 H(+)</text>
        <dbReference type="Rhea" id="RHEA:36631"/>
        <dbReference type="ChEBI" id="CHEBI:15378"/>
        <dbReference type="ChEBI" id="CHEBI:15379"/>
        <dbReference type="ChEBI" id="CHEBI:57870"/>
        <dbReference type="ChEBI" id="CHEBI:58033"/>
        <dbReference type="ChEBI" id="CHEBI:58272"/>
    </reaction>
</comment>
<comment type="cofactor">
    <cofactor evidence="1">
        <name>Mg(2+)</name>
        <dbReference type="ChEBI" id="CHEBI:18420"/>
    </cofactor>
    <text evidence="1">Binds 1 Mg(2+) ion per subunit.</text>
</comment>
<comment type="subunit">
    <text evidence="1">Heterohexadecamer of 8 large chains and 8 small chains.</text>
</comment>
<comment type="subcellular location">
    <subcellularLocation>
        <location evidence="1">Carboxysome</location>
    </subcellularLocation>
</comment>
<comment type="miscellaneous">
    <text evidence="1">The basic functional RuBisCO is composed of a large chain homodimer in a 'head-to-tail' conformation. In form I RuBisCO this homodimer is arranged in a barrel-like tetramer with the small subunits forming a tetrameric 'cap' on each end of the 'barrel'.</text>
</comment>
<comment type="similarity">
    <text evidence="1">Belongs to the RuBisCO large chain family. Type I subfamily.</text>
</comment>
<organism>
    <name type="scientific">Synechococcus sp. (strain CC9902)</name>
    <dbReference type="NCBI Taxonomy" id="316279"/>
    <lineage>
        <taxon>Bacteria</taxon>
        <taxon>Bacillati</taxon>
        <taxon>Cyanobacteriota</taxon>
        <taxon>Cyanophyceae</taxon>
        <taxon>Synechococcales</taxon>
        <taxon>Synechococcaceae</taxon>
        <taxon>Synechococcus</taxon>
    </lineage>
</organism>
<proteinExistence type="inferred from homology"/>
<feature type="chain" id="PRO_0000251464" description="Ribulose bisphosphate carboxylase large chain">
    <location>
        <begin position="1"/>
        <end position="470"/>
    </location>
</feature>
<feature type="active site" description="Proton acceptor" evidence="1">
    <location>
        <position position="167"/>
    </location>
</feature>
<feature type="active site" description="Proton acceptor" evidence="1">
    <location>
        <position position="286"/>
    </location>
</feature>
<feature type="binding site" description="in homodimeric partner" evidence="1">
    <location>
        <position position="115"/>
    </location>
    <ligand>
        <name>substrate</name>
    </ligand>
</feature>
<feature type="binding site" evidence="1">
    <location>
        <position position="165"/>
    </location>
    <ligand>
        <name>substrate</name>
    </ligand>
</feature>
<feature type="binding site" evidence="1">
    <location>
        <position position="169"/>
    </location>
    <ligand>
        <name>substrate</name>
    </ligand>
</feature>
<feature type="binding site" description="via carbamate group" evidence="1">
    <location>
        <position position="193"/>
    </location>
    <ligand>
        <name>Mg(2+)</name>
        <dbReference type="ChEBI" id="CHEBI:18420"/>
    </ligand>
</feature>
<feature type="binding site" evidence="1">
    <location>
        <position position="195"/>
    </location>
    <ligand>
        <name>Mg(2+)</name>
        <dbReference type="ChEBI" id="CHEBI:18420"/>
    </ligand>
</feature>
<feature type="binding site" evidence="1">
    <location>
        <position position="196"/>
    </location>
    <ligand>
        <name>Mg(2+)</name>
        <dbReference type="ChEBI" id="CHEBI:18420"/>
    </ligand>
</feature>
<feature type="binding site" evidence="1">
    <location>
        <position position="287"/>
    </location>
    <ligand>
        <name>substrate</name>
    </ligand>
</feature>
<feature type="binding site" evidence="1">
    <location>
        <position position="319"/>
    </location>
    <ligand>
        <name>substrate</name>
    </ligand>
</feature>
<feature type="binding site" evidence="1">
    <location>
        <position position="371"/>
    </location>
    <ligand>
        <name>substrate</name>
    </ligand>
</feature>
<feature type="site" description="Transition state stabilizer" evidence="1">
    <location>
        <position position="326"/>
    </location>
</feature>
<feature type="modified residue" description="N6-carboxylysine" evidence="1">
    <location>
        <position position="193"/>
    </location>
</feature>
<keyword id="KW-1283">Bacterial microcompartment</keyword>
<keyword id="KW-0113">Calvin cycle</keyword>
<keyword id="KW-0120">Carbon dioxide fixation</keyword>
<keyword id="KW-1282">Carboxysome</keyword>
<keyword id="KW-0456">Lyase</keyword>
<keyword id="KW-0460">Magnesium</keyword>
<keyword id="KW-0479">Metal-binding</keyword>
<keyword id="KW-0503">Monooxygenase</keyword>
<keyword id="KW-0560">Oxidoreductase</keyword>
<keyword id="KW-0601">Photorespiration</keyword>
<keyword id="KW-0602">Photosynthesis</keyword>
<keyword id="KW-1185">Reference proteome</keyword>